<reference key="1">
    <citation type="journal article" date="2008" name="PLoS Genet.">
        <title>Complete genome sequence of the complex carbohydrate-degrading marine bacterium, Saccharophagus degradans strain 2-40 T.</title>
        <authorList>
            <person name="Weiner R.M."/>
            <person name="Taylor L.E. II"/>
            <person name="Henrissat B."/>
            <person name="Hauser L."/>
            <person name="Land M."/>
            <person name="Coutinho P.M."/>
            <person name="Rancurel C."/>
            <person name="Saunders E.H."/>
            <person name="Longmire A.G."/>
            <person name="Zhang H."/>
            <person name="Bayer E.A."/>
            <person name="Gilbert H.J."/>
            <person name="Larimer F."/>
            <person name="Zhulin I.B."/>
            <person name="Ekborg N.A."/>
            <person name="Lamed R."/>
            <person name="Richardson P.M."/>
            <person name="Borovok I."/>
            <person name="Hutcheson S."/>
        </authorList>
    </citation>
    <scope>NUCLEOTIDE SEQUENCE [LARGE SCALE GENOMIC DNA]</scope>
    <source>
        <strain>2-40 / ATCC 43961 / DSM 17024</strain>
    </source>
</reference>
<proteinExistence type="inferred from homology"/>
<organism>
    <name type="scientific">Saccharophagus degradans (strain 2-40 / ATCC 43961 / DSM 17024)</name>
    <dbReference type="NCBI Taxonomy" id="203122"/>
    <lineage>
        <taxon>Bacteria</taxon>
        <taxon>Pseudomonadati</taxon>
        <taxon>Pseudomonadota</taxon>
        <taxon>Gammaproteobacteria</taxon>
        <taxon>Cellvibrionales</taxon>
        <taxon>Cellvibrionaceae</taxon>
        <taxon>Saccharophagus</taxon>
    </lineage>
</organism>
<feature type="chain" id="PRO_0000272145" description="Lipoprotein-releasing system ATP-binding protein LolD">
    <location>
        <begin position="1"/>
        <end position="228"/>
    </location>
</feature>
<feature type="domain" description="ABC transporter" evidence="1">
    <location>
        <begin position="6"/>
        <end position="228"/>
    </location>
</feature>
<feature type="binding site" evidence="1">
    <location>
        <begin position="42"/>
        <end position="49"/>
    </location>
    <ligand>
        <name>ATP</name>
        <dbReference type="ChEBI" id="CHEBI:30616"/>
    </ligand>
</feature>
<dbReference type="EC" id="7.6.2.-" evidence="1"/>
<dbReference type="EMBL" id="CP000282">
    <property type="protein sequence ID" value="ABD81070.1"/>
    <property type="molecule type" value="Genomic_DNA"/>
</dbReference>
<dbReference type="RefSeq" id="WP_011468290.1">
    <property type="nucleotide sequence ID" value="NC_007912.1"/>
</dbReference>
<dbReference type="SMR" id="Q21JQ9"/>
<dbReference type="STRING" id="203122.Sde_1810"/>
<dbReference type="GeneID" id="98613482"/>
<dbReference type="KEGG" id="sde:Sde_1810"/>
<dbReference type="eggNOG" id="COG1136">
    <property type="taxonomic scope" value="Bacteria"/>
</dbReference>
<dbReference type="HOGENOM" id="CLU_000604_1_22_6"/>
<dbReference type="OrthoDB" id="9801477at2"/>
<dbReference type="Proteomes" id="UP000001947">
    <property type="component" value="Chromosome"/>
</dbReference>
<dbReference type="GO" id="GO:0005886">
    <property type="term" value="C:plasma membrane"/>
    <property type="evidence" value="ECO:0007669"/>
    <property type="project" value="UniProtKB-SubCell"/>
</dbReference>
<dbReference type="GO" id="GO:0005524">
    <property type="term" value="F:ATP binding"/>
    <property type="evidence" value="ECO:0007669"/>
    <property type="project" value="UniProtKB-KW"/>
</dbReference>
<dbReference type="GO" id="GO:0016887">
    <property type="term" value="F:ATP hydrolysis activity"/>
    <property type="evidence" value="ECO:0007669"/>
    <property type="project" value="InterPro"/>
</dbReference>
<dbReference type="GO" id="GO:0044873">
    <property type="term" value="P:lipoprotein localization to membrane"/>
    <property type="evidence" value="ECO:0007669"/>
    <property type="project" value="InterPro"/>
</dbReference>
<dbReference type="CDD" id="cd03255">
    <property type="entry name" value="ABC_MJ0796_LolCDE_FtsE"/>
    <property type="match status" value="1"/>
</dbReference>
<dbReference type="FunFam" id="3.40.50.300:FF:000230">
    <property type="entry name" value="Lipoprotein-releasing system ATP-binding protein LolD"/>
    <property type="match status" value="1"/>
</dbReference>
<dbReference type="Gene3D" id="3.40.50.300">
    <property type="entry name" value="P-loop containing nucleotide triphosphate hydrolases"/>
    <property type="match status" value="1"/>
</dbReference>
<dbReference type="InterPro" id="IPR003593">
    <property type="entry name" value="AAA+_ATPase"/>
</dbReference>
<dbReference type="InterPro" id="IPR003439">
    <property type="entry name" value="ABC_transporter-like_ATP-bd"/>
</dbReference>
<dbReference type="InterPro" id="IPR017871">
    <property type="entry name" value="ABC_transporter-like_CS"/>
</dbReference>
<dbReference type="InterPro" id="IPR011924">
    <property type="entry name" value="LolD_lipo_ATP-bd"/>
</dbReference>
<dbReference type="InterPro" id="IPR017911">
    <property type="entry name" value="MacB-like_ATP-bd"/>
</dbReference>
<dbReference type="InterPro" id="IPR027417">
    <property type="entry name" value="P-loop_NTPase"/>
</dbReference>
<dbReference type="NCBIfam" id="TIGR02211">
    <property type="entry name" value="LolD_lipo_ex"/>
    <property type="match status" value="1"/>
</dbReference>
<dbReference type="PANTHER" id="PTHR42798:SF2">
    <property type="entry name" value="ABC TRANSPORTER ATP-BINDING PROTEIN MG467-RELATED"/>
    <property type="match status" value="1"/>
</dbReference>
<dbReference type="PANTHER" id="PTHR42798">
    <property type="entry name" value="LIPOPROTEIN-RELEASING SYSTEM ATP-BINDING PROTEIN LOLD"/>
    <property type="match status" value="1"/>
</dbReference>
<dbReference type="Pfam" id="PF00005">
    <property type="entry name" value="ABC_tran"/>
    <property type="match status" value="1"/>
</dbReference>
<dbReference type="SMART" id="SM00382">
    <property type="entry name" value="AAA"/>
    <property type="match status" value="1"/>
</dbReference>
<dbReference type="SUPFAM" id="SSF52540">
    <property type="entry name" value="P-loop containing nucleoside triphosphate hydrolases"/>
    <property type="match status" value="1"/>
</dbReference>
<dbReference type="PROSITE" id="PS00211">
    <property type="entry name" value="ABC_TRANSPORTER_1"/>
    <property type="match status" value="1"/>
</dbReference>
<dbReference type="PROSITE" id="PS50893">
    <property type="entry name" value="ABC_TRANSPORTER_2"/>
    <property type="match status" value="1"/>
</dbReference>
<dbReference type="PROSITE" id="PS51244">
    <property type="entry name" value="LOLD"/>
    <property type="match status" value="1"/>
</dbReference>
<evidence type="ECO:0000255" key="1">
    <source>
        <dbReference type="HAMAP-Rule" id="MF_01708"/>
    </source>
</evidence>
<gene>
    <name evidence="1" type="primary">lolD</name>
    <name type="ordered locus">Sde_1810</name>
</gene>
<name>LOLD_SACD2</name>
<protein>
    <recommendedName>
        <fullName evidence="1">Lipoprotein-releasing system ATP-binding protein LolD</fullName>
        <ecNumber evidence="1">7.6.2.-</ecNumber>
    </recommendedName>
</protein>
<comment type="function">
    <text evidence="1">Part of the ABC transporter complex LolCDE involved in the translocation of mature outer membrane-directed lipoproteins, from the inner membrane to the periplasmic chaperone, LolA. Responsible for the formation of the LolA-lipoprotein complex in an ATP-dependent manner.</text>
</comment>
<comment type="subunit">
    <text evidence="1">The complex is composed of two ATP-binding proteins (LolD) and two transmembrane proteins (LolC and LolE).</text>
</comment>
<comment type="subcellular location">
    <subcellularLocation>
        <location evidence="1">Cell inner membrane</location>
        <topology evidence="1">Peripheral membrane protein</topology>
    </subcellularLocation>
</comment>
<comment type="similarity">
    <text evidence="1">Belongs to the ABC transporter superfamily. Lipoprotein translocase (TC 3.A.1.125) family.</text>
</comment>
<keyword id="KW-0067">ATP-binding</keyword>
<keyword id="KW-0997">Cell inner membrane</keyword>
<keyword id="KW-1003">Cell membrane</keyword>
<keyword id="KW-0472">Membrane</keyword>
<keyword id="KW-0547">Nucleotide-binding</keyword>
<keyword id="KW-1185">Reference proteome</keyword>
<keyword id="KW-1278">Translocase</keyword>
<keyword id="KW-0813">Transport</keyword>
<sequence length="228" mass="24775">MSTPVIKCLNVVKGYSEGPQKVEVLRGVNLQIEQGQHIAIVGASGSGKSTLLNVLGGLDKPDAGEVWVNEKAFSSLNDNKRGLVRNQELGFVYQFHHLLPEFTALENVMMPCLIAGVKKAQAKQKAEALLDKVGLSHRLDHKPAELSGGERQRVAIARALVNEPACVLMDEPTGNLDTENAESIQSLMKELSAQLQTSFIVVTHDLVLANTMNQVYRLEAGVLNKQGQ</sequence>
<accession>Q21JQ9</accession>